<sequence length="100" mass="11599">MATKLVESEIENKLEALNALITDDTPWERSGDSIKKTFTFKSFIRAFGWMSQMAIWAEKLKHHPEWFNVYNKVEVTLTTHDAGGLTELDFSLAEKMEKFK</sequence>
<reference key="1">
    <citation type="journal article" date="2008" name="ISME J.">
        <title>Comparative genomics of two ecotypes of the marine planktonic copiotroph Alteromonas macleodii suggests alternative lifestyles associated with different kinds of particulate organic matter.</title>
        <authorList>
            <person name="Ivars-Martinez E."/>
            <person name="Martin-Cuadrado A.-B."/>
            <person name="D'Auria G."/>
            <person name="Mira A."/>
            <person name="Ferriera S."/>
            <person name="Johnson J."/>
            <person name="Friedman R."/>
            <person name="Rodriguez-Valera F."/>
        </authorList>
    </citation>
    <scope>NUCLEOTIDE SEQUENCE [LARGE SCALE GENOMIC DNA]</scope>
    <source>
        <strain>DSM 17117 / CIP 110805 / LMG 28347 / Deep ecotype</strain>
    </source>
</reference>
<protein>
    <recommendedName>
        <fullName evidence="1">Putative pterin-4-alpha-carbinolamine dehydratase</fullName>
        <shortName evidence="1">PHS</shortName>
        <ecNumber evidence="1">4.2.1.96</ecNumber>
    </recommendedName>
    <alternativeName>
        <fullName evidence="1">4-alpha-hydroxy-tetrahydropterin dehydratase</fullName>
    </alternativeName>
    <alternativeName>
        <fullName evidence="1">Pterin carbinolamine dehydratase</fullName>
        <shortName evidence="1">PCD</shortName>
    </alternativeName>
</protein>
<proteinExistence type="inferred from homology"/>
<organism>
    <name type="scientific">Alteromonas mediterranea (strain DSM 17117 / CIP 110805 / LMG 28347 / Deep ecotype)</name>
    <dbReference type="NCBI Taxonomy" id="1774373"/>
    <lineage>
        <taxon>Bacteria</taxon>
        <taxon>Pseudomonadati</taxon>
        <taxon>Pseudomonadota</taxon>
        <taxon>Gammaproteobacteria</taxon>
        <taxon>Alteromonadales</taxon>
        <taxon>Alteromonadaceae</taxon>
        <taxon>Alteromonas/Salinimonas group</taxon>
        <taxon>Alteromonas</taxon>
    </lineage>
</organism>
<evidence type="ECO:0000255" key="1">
    <source>
        <dbReference type="HAMAP-Rule" id="MF_00434"/>
    </source>
</evidence>
<name>PHS_ALTMD</name>
<keyword id="KW-0456">Lyase</keyword>
<dbReference type="EC" id="4.2.1.96" evidence="1"/>
<dbReference type="EMBL" id="CP001103">
    <property type="protein sequence ID" value="AEA97917.1"/>
    <property type="molecule type" value="Genomic_DNA"/>
</dbReference>
<dbReference type="RefSeq" id="WP_012518248.1">
    <property type="nucleotide sequence ID" value="NC_011138.3"/>
</dbReference>
<dbReference type="SMR" id="B4RXT2"/>
<dbReference type="KEGG" id="amc:MADE_1008895"/>
<dbReference type="HOGENOM" id="CLU_081974_3_2_6"/>
<dbReference type="Proteomes" id="UP000001870">
    <property type="component" value="Chromosome"/>
</dbReference>
<dbReference type="GO" id="GO:0008124">
    <property type="term" value="F:4-alpha-hydroxytetrahydrobiopterin dehydratase activity"/>
    <property type="evidence" value="ECO:0007669"/>
    <property type="project" value="UniProtKB-UniRule"/>
</dbReference>
<dbReference type="GO" id="GO:0006729">
    <property type="term" value="P:tetrahydrobiopterin biosynthetic process"/>
    <property type="evidence" value="ECO:0007669"/>
    <property type="project" value="InterPro"/>
</dbReference>
<dbReference type="CDD" id="cd00914">
    <property type="entry name" value="PCD_DCoH_subfamily_b"/>
    <property type="match status" value="1"/>
</dbReference>
<dbReference type="Gene3D" id="3.30.1360.20">
    <property type="entry name" value="Transcriptional coactivator/pterin dehydratase"/>
    <property type="match status" value="1"/>
</dbReference>
<dbReference type="HAMAP" id="MF_00434">
    <property type="entry name" value="Pterin_4_alpha"/>
    <property type="match status" value="1"/>
</dbReference>
<dbReference type="InterPro" id="IPR036428">
    <property type="entry name" value="PCD_sf"/>
</dbReference>
<dbReference type="InterPro" id="IPR001533">
    <property type="entry name" value="Pterin_deHydtase"/>
</dbReference>
<dbReference type="NCBIfam" id="NF002017">
    <property type="entry name" value="PRK00823.1-2"/>
    <property type="match status" value="1"/>
</dbReference>
<dbReference type="NCBIfam" id="NF002018">
    <property type="entry name" value="PRK00823.1-3"/>
    <property type="match status" value="1"/>
</dbReference>
<dbReference type="PANTHER" id="PTHR12599">
    <property type="entry name" value="PTERIN-4-ALPHA-CARBINOLAMINE DEHYDRATASE"/>
    <property type="match status" value="1"/>
</dbReference>
<dbReference type="PANTHER" id="PTHR12599:SF0">
    <property type="entry name" value="PTERIN-4-ALPHA-CARBINOLAMINE DEHYDRATASE"/>
    <property type="match status" value="1"/>
</dbReference>
<dbReference type="Pfam" id="PF01329">
    <property type="entry name" value="Pterin_4a"/>
    <property type="match status" value="1"/>
</dbReference>
<dbReference type="SUPFAM" id="SSF55248">
    <property type="entry name" value="PCD-like"/>
    <property type="match status" value="1"/>
</dbReference>
<comment type="catalytic activity">
    <reaction evidence="1">
        <text>(4aS,6R)-4a-hydroxy-L-erythro-5,6,7,8-tetrahydrobiopterin = (6R)-L-erythro-6,7-dihydrobiopterin + H2O</text>
        <dbReference type="Rhea" id="RHEA:11920"/>
        <dbReference type="ChEBI" id="CHEBI:15377"/>
        <dbReference type="ChEBI" id="CHEBI:15642"/>
        <dbReference type="ChEBI" id="CHEBI:43120"/>
        <dbReference type="EC" id="4.2.1.96"/>
    </reaction>
</comment>
<comment type="similarity">
    <text evidence="1">Belongs to the pterin-4-alpha-carbinolamine dehydratase family.</text>
</comment>
<feature type="chain" id="PRO_1000134945" description="Putative pterin-4-alpha-carbinolamine dehydratase">
    <location>
        <begin position="1"/>
        <end position="100"/>
    </location>
</feature>
<accession>B4RXT2</accession>
<accession>F2GAC3</accession>
<gene>
    <name type="ordered locus">MADE_1008895</name>
</gene>